<evidence type="ECO:0000250" key="1"/>
<evidence type="ECO:0000305" key="2"/>
<feature type="chain" id="PRO_0000255605" description="RNA polymerase II subunit A C-terminal domain phosphatase SSU72">
    <location>
        <begin position="1"/>
        <end position="204"/>
    </location>
</feature>
<gene>
    <name type="primary">SSU72</name>
    <name type="ordered locus">CAGL0K05071g</name>
</gene>
<accession>Q6FMU7</accession>
<sequence length="204" mass="23379">MDQKQALKFCTVCASNNNRSMESHRILQEAGYEVSSYGTGSAVRLPGLSFDKPNVYPFGTPYNDIYNDLLSQSAERYKANGLLQMLDRNRRLKKAPEKWQEGTKTFDFVFTCEERCFDAVCEDLMNRGGRLNKIVHVINIDIRDDNENAKIGGRAILELANMLNEKVSECEQNDTLFEDCILDILTKWQEAHPQLPCLYAPSYY</sequence>
<protein>
    <recommendedName>
        <fullName>RNA polymerase II subunit A C-terminal domain phosphatase SSU72</fullName>
        <shortName>CTD phosphatase SSU72</shortName>
        <ecNumber>3.1.3.16</ecNumber>
    </recommendedName>
    <alternativeName>
        <fullName>Suppressor of SUA7 protein 2 homolog</fullName>
    </alternativeName>
</protein>
<proteinExistence type="inferred from homology"/>
<dbReference type="EC" id="3.1.3.16"/>
<dbReference type="EMBL" id="CR380957">
    <property type="protein sequence ID" value="CAG61408.1"/>
    <property type="molecule type" value="Genomic_DNA"/>
</dbReference>
<dbReference type="RefSeq" id="XP_448447.1">
    <property type="nucleotide sequence ID" value="XM_448447.1"/>
</dbReference>
<dbReference type="SMR" id="Q6FMU7"/>
<dbReference type="FunCoup" id="Q6FMU7">
    <property type="interactions" value="1025"/>
</dbReference>
<dbReference type="STRING" id="284593.Q6FMU7"/>
<dbReference type="EnsemblFungi" id="CAGL0K05071g-T">
    <property type="protein sequence ID" value="CAGL0K05071g-T-p1"/>
    <property type="gene ID" value="CAGL0K05071g"/>
</dbReference>
<dbReference type="KEGG" id="cgr:2890504"/>
<dbReference type="CGD" id="CAL0134219">
    <property type="gene designation" value="CAGL0K05071g"/>
</dbReference>
<dbReference type="VEuPathDB" id="FungiDB:B1J91_K05071g"/>
<dbReference type="VEuPathDB" id="FungiDB:CAGL0K05071g"/>
<dbReference type="eggNOG" id="KOG2424">
    <property type="taxonomic scope" value="Eukaryota"/>
</dbReference>
<dbReference type="HOGENOM" id="CLU_062463_0_1_1"/>
<dbReference type="InParanoid" id="Q6FMU7"/>
<dbReference type="OMA" id="TQPNVYQ"/>
<dbReference type="Proteomes" id="UP000002428">
    <property type="component" value="Chromosome K"/>
</dbReference>
<dbReference type="GO" id="GO:0000785">
    <property type="term" value="C:chromatin"/>
    <property type="evidence" value="ECO:0007669"/>
    <property type="project" value="EnsemblFungi"/>
</dbReference>
<dbReference type="GO" id="GO:0005847">
    <property type="term" value="C:mRNA cleavage and polyadenylation specificity factor complex"/>
    <property type="evidence" value="ECO:0007669"/>
    <property type="project" value="EnsemblFungi"/>
</dbReference>
<dbReference type="GO" id="GO:0004725">
    <property type="term" value="F:protein tyrosine phosphatase activity"/>
    <property type="evidence" value="ECO:0007669"/>
    <property type="project" value="EnsemblFungi"/>
</dbReference>
<dbReference type="GO" id="GO:0180007">
    <property type="term" value="F:RNA polymerase II CTD heptapeptide repeat S5 phosphatase activity"/>
    <property type="evidence" value="ECO:0007669"/>
    <property type="project" value="EnsemblFungi"/>
</dbReference>
<dbReference type="GO" id="GO:0030643">
    <property type="term" value="P:intracellular phosphate ion homeostasis"/>
    <property type="evidence" value="ECO:0007669"/>
    <property type="project" value="EnsemblFungi"/>
</dbReference>
<dbReference type="GO" id="GO:0031124">
    <property type="term" value="P:mRNA 3'-end processing"/>
    <property type="evidence" value="ECO:0007669"/>
    <property type="project" value="EnsemblFungi"/>
</dbReference>
<dbReference type="GO" id="GO:0032215">
    <property type="term" value="P:positive regulation of telomere maintenance via semi-conservative replication"/>
    <property type="evidence" value="ECO:0007669"/>
    <property type="project" value="EnsemblFungi"/>
</dbReference>
<dbReference type="GO" id="GO:0090052">
    <property type="term" value="P:regulation of pericentric heterochromatin formation"/>
    <property type="evidence" value="ECO:0007669"/>
    <property type="project" value="EnsemblFungi"/>
</dbReference>
<dbReference type="GO" id="GO:1902801">
    <property type="term" value="P:regulation of siRNA-independent facultative heterochromatin formation"/>
    <property type="evidence" value="ECO:0007669"/>
    <property type="project" value="EnsemblFungi"/>
</dbReference>
<dbReference type="GO" id="GO:0009302">
    <property type="term" value="P:sno(s)RNA transcription"/>
    <property type="evidence" value="ECO:0007669"/>
    <property type="project" value="EnsemblFungi"/>
</dbReference>
<dbReference type="GO" id="GO:0030847">
    <property type="term" value="P:termination of RNA polymerase II transcription, exosome-dependent"/>
    <property type="evidence" value="ECO:0007669"/>
    <property type="project" value="EnsemblFungi"/>
</dbReference>
<dbReference type="GO" id="GO:0030846">
    <property type="term" value="P:termination of RNA polymerase II transcription, poly(A)-coupled"/>
    <property type="evidence" value="ECO:0007669"/>
    <property type="project" value="EnsemblFungi"/>
</dbReference>
<dbReference type="GO" id="GO:0031564">
    <property type="term" value="P:transcription antitermination"/>
    <property type="evidence" value="ECO:0007669"/>
    <property type="project" value="EnsemblFungi"/>
</dbReference>
<dbReference type="GO" id="GO:0006368">
    <property type="term" value="P:transcription elongation by RNA polymerase II"/>
    <property type="evidence" value="ECO:0007669"/>
    <property type="project" value="EnsemblFungi"/>
</dbReference>
<dbReference type="GO" id="GO:0001174">
    <property type="term" value="P:transcriptional start site selection at RNA polymerase II promoter"/>
    <property type="evidence" value="ECO:0007669"/>
    <property type="project" value="EnsemblFungi"/>
</dbReference>
<dbReference type="FunFam" id="3.40.50.2300:FF:000039">
    <property type="entry name" value="RNA polymerase II subunit A C-terminal domain phosphatase"/>
    <property type="match status" value="1"/>
</dbReference>
<dbReference type="FunFam" id="3.40.50.2300:FF:000189">
    <property type="entry name" value="SSU72p Phosphatase and transcription/RNA-processing factor"/>
    <property type="match status" value="1"/>
</dbReference>
<dbReference type="Gene3D" id="3.40.50.2300">
    <property type="match status" value="2"/>
</dbReference>
<dbReference type="InterPro" id="IPR006811">
    <property type="entry name" value="RNA_pol_II_suA"/>
</dbReference>
<dbReference type="PANTHER" id="PTHR20383">
    <property type="entry name" value="RNA POLYMERASE II SUBUNIT A C-TERMINAL DOMAIN PHOSPHATASE"/>
    <property type="match status" value="1"/>
</dbReference>
<dbReference type="Pfam" id="PF04722">
    <property type="entry name" value="Ssu72"/>
    <property type="match status" value="1"/>
</dbReference>
<keyword id="KW-0378">Hydrolase</keyword>
<keyword id="KW-0507">mRNA processing</keyword>
<keyword id="KW-0539">Nucleus</keyword>
<keyword id="KW-0904">Protein phosphatase</keyword>
<keyword id="KW-1185">Reference proteome</keyword>
<reference key="1">
    <citation type="journal article" date="2004" name="Nature">
        <title>Genome evolution in yeasts.</title>
        <authorList>
            <person name="Dujon B."/>
            <person name="Sherman D."/>
            <person name="Fischer G."/>
            <person name="Durrens P."/>
            <person name="Casaregola S."/>
            <person name="Lafontaine I."/>
            <person name="de Montigny J."/>
            <person name="Marck C."/>
            <person name="Neuveglise C."/>
            <person name="Talla E."/>
            <person name="Goffard N."/>
            <person name="Frangeul L."/>
            <person name="Aigle M."/>
            <person name="Anthouard V."/>
            <person name="Babour A."/>
            <person name="Barbe V."/>
            <person name="Barnay S."/>
            <person name="Blanchin S."/>
            <person name="Beckerich J.-M."/>
            <person name="Beyne E."/>
            <person name="Bleykasten C."/>
            <person name="Boisrame A."/>
            <person name="Boyer J."/>
            <person name="Cattolico L."/>
            <person name="Confanioleri F."/>
            <person name="de Daruvar A."/>
            <person name="Despons L."/>
            <person name="Fabre E."/>
            <person name="Fairhead C."/>
            <person name="Ferry-Dumazet H."/>
            <person name="Groppi A."/>
            <person name="Hantraye F."/>
            <person name="Hennequin C."/>
            <person name="Jauniaux N."/>
            <person name="Joyet P."/>
            <person name="Kachouri R."/>
            <person name="Kerrest A."/>
            <person name="Koszul R."/>
            <person name="Lemaire M."/>
            <person name="Lesur I."/>
            <person name="Ma L."/>
            <person name="Muller H."/>
            <person name="Nicaud J.-M."/>
            <person name="Nikolski M."/>
            <person name="Oztas S."/>
            <person name="Ozier-Kalogeropoulos O."/>
            <person name="Pellenz S."/>
            <person name="Potier S."/>
            <person name="Richard G.-F."/>
            <person name="Straub M.-L."/>
            <person name="Suleau A."/>
            <person name="Swennen D."/>
            <person name="Tekaia F."/>
            <person name="Wesolowski-Louvel M."/>
            <person name="Westhof E."/>
            <person name="Wirth B."/>
            <person name="Zeniou-Meyer M."/>
            <person name="Zivanovic Y."/>
            <person name="Bolotin-Fukuhara M."/>
            <person name="Thierry A."/>
            <person name="Bouchier C."/>
            <person name="Caudron B."/>
            <person name="Scarpelli C."/>
            <person name="Gaillardin C."/>
            <person name="Weissenbach J."/>
            <person name="Wincker P."/>
            <person name="Souciet J.-L."/>
        </authorList>
    </citation>
    <scope>NUCLEOTIDE SEQUENCE [LARGE SCALE GENOMIC DNA]</scope>
    <source>
        <strain>ATCC 2001 / BCRC 20586 / JCM 3761 / NBRC 0622 / NRRL Y-65 / CBS 138</strain>
    </source>
</reference>
<organism>
    <name type="scientific">Candida glabrata (strain ATCC 2001 / BCRC 20586 / JCM 3761 / NBRC 0622 / NRRL Y-65 / CBS 138)</name>
    <name type="common">Yeast</name>
    <name type="synonym">Nakaseomyces glabratus</name>
    <dbReference type="NCBI Taxonomy" id="284593"/>
    <lineage>
        <taxon>Eukaryota</taxon>
        <taxon>Fungi</taxon>
        <taxon>Dikarya</taxon>
        <taxon>Ascomycota</taxon>
        <taxon>Saccharomycotina</taxon>
        <taxon>Saccharomycetes</taxon>
        <taxon>Saccharomycetales</taxon>
        <taxon>Saccharomycetaceae</taxon>
        <taxon>Nakaseomyces</taxon>
    </lineage>
</organism>
<name>SSU72_CANGA</name>
<comment type="function">
    <text evidence="1">Processively dephosphorylates Ser-5 of the heptad repeats YSPTSPS in the C-terminal domain of the largest RNA polymerase II subunit (RPB1).</text>
</comment>
<comment type="function">
    <text evidence="1">Component of the cleavage and polyadenylation factor (CPF) complex, which plays a key role in polyadenylation-dependent pre-mRNA 3'-end formation and cooperates with cleavage factors including the CFIA complex and NAB4/CFIB. SSU72 is required for 3'-end formation of snoRNAs (By similarity).</text>
</comment>
<comment type="catalytic activity">
    <reaction>
        <text>O-phospho-L-seryl-[protein] + H2O = L-seryl-[protein] + phosphate</text>
        <dbReference type="Rhea" id="RHEA:20629"/>
        <dbReference type="Rhea" id="RHEA-COMP:9863"/>
        <dbReference type="Rhea" id="RHEA-COMP:11604"/>
        <dbReference type="ChEBI" id="CHEBI:15377"/>
        <dbReference type="ChEBI" id="CHEBI:29999"/>
        <dbReference type="ChEBI" id="CHEBI:43474"/>
        <dbReference type="ChEBI" id="CHEBI:83421"/>
        <dbReference type="EC" id="3.1.3.16"/>
    </reaction>
</comment>
<comment type="catalytic activity">
    <reaction>
        <text>O-phospho-L-threonyl-[protein] + H2O = L-threonyl-[protein] + phosphate</text>
        <dbReference type="Rhea" id="RHEA:47004"/>
        <dbReference type="Rhea" id="RHEA-COMP:11060"/>
        <dbReference type="Rhea" id="RHEA-COMP:11605"/>
        <dbReference type="ChEBI" id="CHEBI:15377"/>
        <dbReference type="ChEBI" id="CHEBI:30013"/>
        <dbReference type="ChEBI" id="CHEBI:43474"/>
        <dbReference type="ChEBI" id="CHEBI:61977"/>
        <dbReference type="EC" id="3.1.3.16"/>
    </reaction>
</comment>
<comment type="subunit">
    <text evidence="1">Component of the cleavage and polyadenylation factor (CPF) complex.</text>
</comment>
<comment type="subcellular location">
    <subcellularLocation>
        <location evidence="1">Nucleus</location>
    </subcellularLocation>
</comment>
<comment type="similarity">
    <text evidence="2">Belongs to the SSU72 phosphatase family.</text>
</comment>